<evidence type="ECO:0000255" key="1">
    <source>
        <dbReference type="HAMAP-Rule" id="MF_00510"/>
    </source>
</evidence>
<keyword id="KW-0963">Cytoplasm</keyword>
<keyword id="KW-0224">Dipeptidase</keyword>
<keyword id="KW-0378">Hydrolase</keyword>
<keyword id="KW-0645">Protease</keyword>
<keyword id="KW-1185">Reference proteome</keyword>
<keyword id="KW-0720">Serine protease</keyword>
<sequence>MNIRALLLSASRVGDTPYLEHTLPFIAPLTEHARNWVFIPYAGISLGYDVYLEKVREGLRNLNINISGIHEHADPRQAIRDADGIFVGGGNTFHLLHELYRYDLLFVIREQVEAGKPYVGWSAGSNIAGLSIRTTNDMPIIEPPSFTALGLLPFQLNPHYTDYQAPGHNGETRAQRLLEFTMVDPLTPVVGIQEGSALYRQGDKLTLLGDKEAYFFKGSVQKSPIAAGADLSELL</sequence>
<dbReference type="EC" id="3.4.13.21" evidence="1"/>
<dbReference type="EMBL" id="CP000507">
    <property type="protein sequence ID" value="ABL99649.1"/>
    <property type="molecule type" value="Genomic_DNA"/>
</dbReference>
<dbReference type="RefSeq" id="WP_011759557.1">
    <property type="nucleotide sequence ID" value="NC_008700.1"/>
</dbReference>
<dbReference type="SMR" id="A1S5J3"/>
<dbReference type="MEROPS" id="S51.001"/>
<dbReference type="KEGG" id="saz:Sama_1442"/>
<dbReference type="eggNOG" id="COG3340">
    <property type="taxonomic scope" value="Bacteria"/>
</dbReference>
<dbReference type="HOGENOM" id="CLU_071689_0_0_6"/>
<dbReference type="OrthoDB" id="3373764at2"/>
<dbReference type="Proteomes" id="UP000009175">
    <property type="component" value="Chromosome"/>
</dbReference>
<dbReference type="GO" id="GO:0005737">
    <property type="term" value="C:cytoplasm"/>
    <property type="evidence" value="ECO:0007669"/>
    <property type="project" value="UniProtKB-SubCell"/>
</dbReference>
<dbReference type="GO" id="GO:0016805">
    <property type="term" value="F:dipeptidase activity"/>
    <property type="evidence" value="ECO:0007669"/>
    <property type="project" value="UniProtKB-UniRule"/>
</dbReference>
<dbReference type="GO" id="GO:0008236">
    <property type="term" value="F:serine-type peptidase activity"/>
    <property type="evidence" value="ECO:0007669"/>
    <property type="project" value="UniProtKB-KW"/>
</dbReference>
<dbReference type="GO" id="GO:0006508">
    <property type="term" value="P:proteolysis"/>
    <property type="evidence" value="ECO:0007669"/>
    <property type="project" value="UniProtKB-UniRule"/>
</dbReference>
<dbReference type="CDD" id="cd03146">
    <property type="entry name" value="GAT1_Peptidase_E"/>
    <property type="match status" value="1"/>
</dbReference>
<dbReference type="FunFam" id="3.40.50.880:FF:000007">
    <property type="entry name" value="Peptidase E"/>
    <property type="match status" value="1"/>
</dbReference>
<dbReference type="Gene3D" id="3.40.50.880">
    <property type="match status" value="1"/>
</dbReference>
<dbReference type="HAMAP" id="MF_00510">
    <property type="entry name" value="Peptidase_E"/>
    <property type="match status" value="1"/>
</dbReference>
<dbReference type="InterPro" id="IPR029062">
    <property type="entry name" value="Class_I_gatase-like"/>
</dbReference>
<dbReference type="InterPro" id="IPR005320">
    <property type="entry name" value="Peptidase_S51"/>
</dbReference>
<dbReference type="InterPro" id="IPR023172">
    <property type="entry name" value="Peptidase_S51_dipeptidase-E"/>
</dbReference>
<dbReference type="NCBIfam" id="NF003642">
    <property type="entry name" value="PRK05282.1"/>
    <property type="match status" value="1"/>
</dbReference>
<dbReference type="PANTHER" id="PTHR20842:SF0">
    <property type="entry name" value="ALPHA-ASPARTYL DIPEPTIDASE"/>
    <property type="match status" value="1"/>
</dbReference>
<dbReference type="PANTHER" id="PTHR20842">
    <property type="entry name" value="PROTEASE S51 ALPHA-ASPARTYL DIPEPTIDASE"/>
    <property type="match status" value="1"/>
</dbReference>
<dbReference type="Pfam" id="PF03575">
    <property type="entry name" value="Peptidase_S51"/>
    <property type="match status" value="1"/>
</dbReference>
<dbReference type="SUPFAM" id="SSF52317">
    <property type="entry name" value="Class I glutamine amidotransferase-like"/>
    <property type="match status" value="1"/>
</dbReference>
<protein>
    <recommendedName>
        <fullName evidence="1">Peptidase E</fullName>
        <ecNumber evidence="1">3.4.13.21</ecNumber>
    </recommendedName>
    <alternativeName>
        <fullName evidence="1">Alpha-aspartyl dipeptidase</fullName>
    </alternativeName>
    <alternativeName>
        <fullName evidence="1">Asp-specific dipeptidase</fullName>
    </alternativeName>
    <alternativeName>
        <fullName evidence="1">Dipeptidase E</fullName>
    </alternativeName>
</protein>
<organism>
    <name type="scientific">Shewanella amazonensis (strain ATCC BAA-1098 / SB2B)</name>
    <dbReference type="NCBI Taxonomy" id="326297"/>
    <lineage>
        <taxon>Bacteria</taxon>
        <taxon>Pseudomonadati</taxon>
        <taxon>Pseudomonadota</taxon>
        <taxon>Gammaproteobacteria</taxon>
        <taxon>Alteromonadales</taxon>
        <taxon>Shewanellaceae</taxon>
        <taxon>Shewanella</taxon>
    </lineage>
</organism>
<feature type="chain" id="PRO_1000050613" description="Peptidase E">
    <location>
        <begin position="1"/>
        <end position="235"/>
    </location>
</feature>
<feature type="active site" description="Charge relay system" evidence="1">
    <location>
        <position position="122"/>
    </location>
</feature>
<feature type="active site" description="Charge relay system" evidence="1">
    <location>
        <position position="137"/>
    </location>
</feature>
<feature type="active site" description="Charge relay system" evidence="1">
    <location>
        <position position="159"/>
    </location>
</feature>
<proteinExistence type="inferred from homology"/>
<comment type="function">
    <text evidence="1">Hydrolyzes dipeptides containing N-terminal aspartate residues. May play a role in allowing the cell to use peptide aspartate to spare carbon otherwise required for the synthesis of the aspartate family of amino acids.</text>
</comment>
<comment type="catalytic activity">
    <reaction evidence="1">
        <text>Dipeptidase E catalyzes the hydrolysis of dipeptides Asp-|-Xaa. It does not act on peptides with N-terminal Glu, Asn or Gln, nor does it cleave isoaspartyl peptides.</text>
        <dbReference type="EC" id="3.4.13.21"/>
    </reaction>
</comment>
<comment type="subcellular location">
    <subcellularLocation>
        <location evidence="1">Cytoplasm</location>
    </subcellularLocation>
</comment>
<comment type="similarity">
    <text evidence="1">Belongs to the peptidase S51 family.</text>
</comment>
<accession>A1S5J3</accession>
<reference key="1">
    <citation type="submission" date="2006-12" db="EMBL/GenBank/DDBJ databases">
        <title>Complete sequence of Shewanella amazonensis SB2B.</title>
        <authorList>
            <consortium name="US DOE Joint Genome Institute"/>
            <person name="Copeland A."/>
            <person name="Lucas S."/>
            <person name="Lapidus A."/>
            <person name="Barry K."/>
            <person name="Detter J.C."/>
            <person name="Glavina del Rio T."/>
            <person name="Hammon N."/>
            <person name="Israni S."/>
            <person name="Dalin E."/>
            <person name="Tice H."/>
            <person name="Pitluck S."/>
            <person name="Munk A.C."/>
            <person name="Brettin T."/>
            <person name="Bruce D."/>
            <person name="Han C."/>
            <person name="Tapia R."/>
            <person name="Gilna P."/>
            <person name="Schmutz J."/>
            <person name="Larimer F."/>
            <person name="Land M."/>
            <person name="Hauser L."/>
            <person name="Kyrpides N."/>
            <person name="Mikhailova N."/>
            <person name="Fredrickson J."/>
            <person name="Richardson P."/>
        </authorList>
    </citation>
    <scope>NUCLEOTIDE SEQUENCE [LARGE SCALE GENOMIC DNA]</scope>
    <source>
        <strain>ATCC BAA-1098 / SB2B</strain>
    </source>
</reference>
<gene>
    <name evidence="1" type="primary">pepE</name>
    <name type="ordered locus">Sama_1442</name>
</gene>
<name>PEPE_SHEAM</name>